<proteinExistence type="inferred from homology"/>
<gene>
    <name evidence="1" type="primary">uspB</name>
    <name type="ordered locus">ECSE_3759</name>
</gene>
<sequence>MISTVALFWALCVVCIVNMARYFSSLRALLVVLRNCDPLLYQYVDGGGFFTSHGQPNKQVRLVWYIYAQRYRDHHDDEFIRRCERVRRQFILTSALCGLVVVSLIALMIWH</sequence>
<dbReference type="EMBL" id="AP009240">
    <property type="protein sequence ID" value="BAG79283.1"/>
    <property type="molecule type" value="Genomic_DNA"/>
</dbReference>
<dbReference type="RefSeq" id="WP_000626187.1">
    <property type="nucleotide sequence ID" value="NC_011415.1"/>
</dbReference>
<dbReference type="SMR" id="B6I356"/>
<dbReference type="GeneID" id="93778499"/>
<dbReference type="KEGG" id="ecy:ECSE_3759"/>
<dbReference type="HOGENOM" id="CLU_151816_0_0_6"/>
<dbReference type="Proteomes" id="UP000008199">
    <property type="component" value="Chromosome"/>
</dbReference>
<dbReference type="GO" id="GO:0005886">
    <property type="term" value="C:plasma membrane"/>
    <property type="evidence" value="ECO:0007669"/>
    <property type="project" value="UniProtKB-SubCell"/>
</dbReference>
<dbReference type="HAMAP" id="MF_01088">
    <property type="entry name" value="UspB"/>
    <property type="match status" value="1"/>
</dbReference>
<dbReference type="InterPro" id="IPR019598">
    <property type="entry name" value="Universal_stress_protein_B"/>
</dbReference>
<dbReference type="NCBIfam" id="NF003435">
    <property type="entry name" value="PRK04960.1"/>
    <property type="match status" value="1"/>
</dbReference>
<dbReference type="Pfam" id="PF10625">
    <property type="entry name" value="UspB"/>
    <property type="match status" value="1"/>
</dbReference>
<comment type="subcellular location">
    <subcellularLocation>
        <location evidence="1">Cell inner membrane</location>
        <topology evidence="1">Multi-pass membrane protein</topology>
    </subcellularLocation>
</comment>
<comment type="similarity">
    <text evidence="1">Belongs to the universal stress protein B family.</text>
</comment>
<name>USPB_ECOSE</name>
<protein>
    <recommendedName>
        <fullName evidence="1">Universal stress protein B</fullName>
    </recommendedName>
</protein>
<evidence type="ECO:0000255" key="1">
    <source>
        <dbReference type="HAMAP-Rule" id="MF_01088"/>
    </source>
</evidence>
<feature type="chain" id="PRO_1000136916" description="Universal stress protein B">
    <location>
        <begin position="1"/>
        <end position="111"/>
    </location>
</feature>
<feature type="transmembrane region" description="Helical" evidence="1">
    <location>
        <begin position="1"/>
        <end position="21"/>
    </location>
</feature>
<feature type="transmembrane region" description="Helical" evidence="1">
    <location>
        <begin position="90"/>
        <end position="110"/>
    </location>
</feature>
<organism>
    <name type="scientific">Escherichia coli (strain SE11)</name>
    <dbReference type="NCBI Taxonomy" id="409438"/>
    <lineage>
        <taxon>Bacteria</taxon>
        <taxon>Pseudomonadati</taxon>
        <taxon>Pseudomonadota</taxon>
        <taxon>Gammaproteobacteria</taxon>
        <taxon>Enterobacterales</taxon>
        <taxon>Enterobacteriaceae</taxon>
        <taxon>Escherichia</taxon>
    </lineage>
</organism>
<accession>B6I356</accession>
<keyword id="KW-0997">Cell inner membrane</keyword>
<keyword id="KW-1003">Cell membrane</keyword>
<keyword id="KW-0472">Membrane</keyword>
<keyword id="KW-0812">Transmembrane</keyword>
<keyword id="KW-1133">Transmembrane helix</keyword>
<reference key="1">
    <citation type="journal article" date="2008" name="DNA Res.">
        <title>Complete genome sequence and comparative analysis of the wild-type commensal Escherichia coli strain SE11 isolated from a healthy adult.</title>
        <authorList>
            <person name="Oshima K."/>
            <person name="Toh H."/>
            <person name="Ogura Y."/>
            <person name="Sasamoto H."/>
            <person name="Morita H."/>
            <person name="Park S.-H."/>
            <person name="Ooka T."/>
            <person name="Iyoda S."/>
            <person name="Taylor T.D."/>
            <person name="Hayashi T."/>
            <person name="Itoh K."/>
            <person name="Hattori M."/>
        </authorList>
    </citation>
    <scope>NUCLEOTIDE SEQUENCE [LARGE SCALE GENOMIC DNA]</scope>
    <source>
        <strain>SE11</strain>
    </source>
</reference>